<proteinExistence type="inferred from homology"/>
<accession>Q31VJ4</accession>
<dbReference type="EC" id="2.4.1.21" evidence="1"/>
<dbReference type="EMBL" id="CP000036">
    <property type="protein sequence ID" value="ABB67914.1"/>
    <property type="molecule type" value="Genomic_DNA"/>
</dbReference>
<dbReference type="RefSeq" id="WP_001197645.1">
    <property type="nucleotide sequence ID" value="NC_007613.1"/>
</dbReference>
<dbReference type="SMR" id="Q31VJ4"/>
<dbReference type="CAZy" id="GT5">
    <property type="family name" value="Glycosyltransferase Family 5"/>
</dbReference>
<dbReference type="KEGG" id="sbo:SBO_3427"/>
<dbReference type="HOGENOM" id="CLU_009583_18_2_6"/>
<dbReference type="UniPathway" id="UPA00164"/>
<dbReference type="Proteomes" id="UP000007067">
    <property type="component" value="Chromosome"/>
</dbReference>
<dbReference type="GO" id="GO:0005829">
    <property type="term" value="C:cytosol"/>
    <property type="evidence" value="ECO:0007669"/>
    <property type="project" value="TreeGrafter"/>
</dbReference>
<dbReference type="GO" id="GO:0009011">
    <property type="term" value="F:alpha-1,4-glucan glucosyltransferase (ADP-glucose donor) activity"/>
    <property type="evidence" value="ECO:0007669"/>
    <property type="project" value="UniProtKB-UniRule"/>
</dbReference>
<dbReference type="GO" id="GO:0004373">
    <property type="term" value="F:alpha-1,4-glucan glucosyltransferase (UDP-glucose donor) activity"/>
    <property type="evidence" value="ECO:0007669"/>
    <property type="project" value="InterPro"/>
</dbReference>
<dbReference type="GO" id="GO:0005978">
    <property type="term" value="P:glycogen biosynthetic process"/>
    <property type="evidence" value="ECO:0007669"/>
    <property type="project" value="UniProtKB-UniRule"/>
</dbReference>
<dbReference type="CDD" id="cd03791">
    <property type="entry name" value="GT5_Glycogen_synthase_DULL1-like"/>
    <property type="match status" value="1"/>
</dbReference>
<dbReference type="FunFam" id="3.40.50.2000:FF:000008">
    <property type="entry name" value="Glycogen synthase"/>
    <property type="match status" value="1"/>
</dbReference>
<dbReference type="FunFam" id="3.40.50.2000:FF:000011">
    <property type="entry name" value="Glycogen synthase"/>
    <property type="match status" value="1"/>
</dbReference>
<dbReference type="Gene3D" id="3.40.50.2000">
    <property type="entry name" value="Glycogen Phosphorylase B"/>
    <property type="match status" value="2"/>
</dbReference>
<dbReference type="HAMAP" id="MF_00484">
    <property type="entry name" value="Glycogen_synth"/>
    <property type="match status" value="1"/>
</dbReference>
<dbReference type="InterPro" id="IPR001296">
    <property type="entry name" value="Glyco_trans_1"/>
</dbReference>
<dbReference type="InterPro" id="IPR011835">
    <property type="entry name" value="GS/SS"/>
</dbReference>
<dbReference type="InterPro" id="IPR013534">
    <property type="entry name" value="Starch_synth_cat_dom"/>
</dbReference>
<dbReference type="NCBIfam" id="TIGR02095">
    <property type="entry name" value="glgA"/>
    <property type="match status" value="1"/>
</dbReference>
<dbReference type="NCBIfam" id="NF001899">
    <property type="entry name" value="PRK00654.1-2"/>
    <property type="match status" value="1"/>
</dbReference>
<dbReference type="PANTHER" id="PTHR45825:SF11">
    <property type="entry name" value="ALPHA AMYLASE DOMAIN-CONTAINING PROTEIN"/>
    <property type="match status" value="1"/>
</dbReference>
<dbReference type="PANTHER" id="PTHR45825">
    <property type="entry name" value="GRANULE-BOUND STARCH SYNTHASE 1, CHLOROPLASTIC/AMYLOPLASTIC"/>
    <property type="match status" value="1"/>
</dbReference>
<dbReference type="Pfam" id="PF08323">
    <property type="entry name" value="Glyco_transf_5"/>
    <property type="match status" value="1"/>
</dbReference>
<dbReference type="Pfam" id="PF00534">
    <property type="entry name" value="Glycos_transf_1"/>
    <property type="match status" value="1"/>
</dbReference>
<dbReference type="SUPFAM" id="SSF53756">
    <property type="entry name" value="UDP-Glycosyltransferase/glycogen phosphorylase"/>
    <property type="match status" value="1"/>
</dbReference>
<organism>
    <name type="scientific">Shigella boydii serotype 4 (strain Sb227)</name>
    <dbReference type="NCBI Taxonomy" id="300268"/>
    <lineage>
        <taxon>Bacteria</taxon>
        <taxon>Pseudomonadati</taxon>
        <taxon>Pseudomonadota</taxon>
        <taxon>Gammaproteobacteria</taxon>
        <taxon>Enterobacterales</taxon>
        <taxon>Enterobacteriaceae</taxon>
        <taxon>Shigella</taxon>
    </lineage>
</organism>
<evidence type="ECO:0000255" key="1">
    <source>
        <dbReference type="HAMAP-Rule" id="MF_00484"/>
    </source>
</evidence>
<feature type="chain" id="PRO_0000230263" description="Glycogen synthase">
    <location>
        <begin position="1"/>
        <end position="477"/>
    </location>
</feature>
<feature type="binding site" evidence="1">
    <location>
        <position position="15"/>
    </location>
    <ligand>
        <name>ADP-alpha-D-glucose</name>
        <dbReference type="ChEBI" id="CHEBI:57498"/>
    </ligand>
</feature>
<name>GLGA_SHIBS</name>
<sequence>MQVLHVCSEMFPLLKTGGLADVIGALPAAQIADGVDARVLLPAFPDIRRGVTDAQVVSRRDTFAGHITLLFGHYNGVGIYLIDAPHLYDRPGSPYHDTNLFAYTDNVLRFALLGWVGAEMASGLDPFWRPDVVHAHDWHAGLAPAYLAARGRPAKSVFTVHNLAYQGMFYAHHMNDIQLPWSFFNIHGLEFNGQISFLKAGLYYADHITAVSPTYAREITEPQFAYGMEGLLQQRHREGRLSGVLNGVDEKIWSPETDLLLASRYTRDTLEDKAENKRQLQIAMGLKVDDKVPLFAVVSRLTSQKGLDLVLEALPGLLEQGGQLALLGAGDPVLQEGFLAAAAEYPGQVGVQIGYHEAFSHRIMGGADVILVPSRFEPCGLTQLYGLKYGTLPLVRRTGGLADTVSDCSLENLADGVASGFVFEDSNAWSLLRAIRRAFVLWSRASLWRFVQRQAMAMDFSWQVAAKSYRELYYRLK</sequence>
<comment type="function">
    <text evidence="1">Synthesizes alpha-1,4-glucan chains using ADP-glucose.</text>
</comment>
<comment type="catalytic activity">
    <reaction evidence="1">
        <text>[(1-&gt;4)-alpha-D-glucosyl](n) + ADP-alpha-D-glucose = [(1-&gt;4)-alpha-D-glucosyl](n+1) + ADP + H(+)</text>
        <dbReference type="Rhea" id="RHEA:18189"/>
        <dbReference type="Rhea" id="RHEA-COMP:9584"/>
        <dbReference type="Rhea" id="RHEA-COMP:9587"/>
        <dbReference type="ChEBI" id="CHEBI:15378"/>
        <dbReference type="ChEBI" id="CHEBI:15444"/>
        <dbReference type="ChEBI" id="CHEBI:57498"/>
        <dbReference type="ChEBI" id="CHEBI:456216"/>
        <dbReference type="EC" id="2.4.1.21"/>
    </reaction>
</comment>
<comment type="pathway">
    <text evidence="1">Glycan biosynthesis; glycogen biosynthesis.</text>
</comment>
<comment type="similarity">
    <text evidence="1">Belongs to the glycosyltransferase 1 family. Bacterial/plant glycogen synthase subfamily.</text>
</comment>
<keyword id="KW-0320">Glycogen biosynthesis</keyword>
<keyword id="KW-0328">Glycosyltransferase</keyword>
<keyword id="KW-0808">Transferase</keyword>
<reference key="1">
    <citation type="journal article" date="2005" name="Nucleic Acids Res.">
        <title>Genome dynamics and diversity of Shigella species, the etiologic agents of bacillary dysentery.</title>
        <authorList>
            <person name="Yang F."/>
            <person name="Yang J."/>
            <person name="Zhang X."/>
            <person name="Chen L."/>
            <person name="Jiang Y."/>
            <person name="Yan Y."/>
            <person name="Tang X."/>
            <person name="Wang J."/>
            <person name="Xiong Z."/>
            <person name="Dong J."/>
            <person name="Xue Y."/>
            <person name="Zhu Y."/>
            <person name="Xu X."/>
            <person name="Sun L."/>
            <person name="Chen S."/>
            <person name="Nie H."/>
            <person name="Peng J."/>
            <person name="Xu J."/>
            <person name="Wang Y."/>
            <person name="Yuan Z."/>
            <person name="Wen Y."/>
            <person name="Yao Z."/>
            <person name="Shen Y."/>
            <person name="Qiang B."/>
            <person name="Hou Y."/>
            <person name="Yu J."/>
            <person name="Jin Q."/>
        </authorList>
    </citation>
    <scope>NUCLEOTIDE SEQUENCE [LARGE SCALE GENOMIC DNA]</scope>
    <source>
        <strain>Sb227</strain>
    </source>
</reference>
<protein>
    <recommendedName>
        <fullName evidence="1">Glycogen synthase</fullName>
        <ecNumber evidence="1">2.4.1.21</ecNumber>
    </recommendedName>
    <alternativeName>
        <fullName evidence="1">Starch [bacterial glycogen] synthase</fullName>
    </alternativeName>
</protein>
<gene>
    <name evidence="1" type="primary">glgA</name>
    <name type="ordered locus">SBO_3427</name>
</gene>